<dbReference type="EC" id="3.1.-.-" evidence="1"/>
<dbReference type="EMBL" id="AL123456">
    <property type="protein sequence ID" value="CCP45556.1"/>
    <property type="molecule type" value="Genomic_DNA"/>
</dbReference>
<dbReference type="PIR" id="D70880">
    <property type="entry name" value="D70880"/>
</dbReference>
<dbReference type="RefSeq" id="NP_217273.1">
    <property type="nucleotide sequence ID" value="NC_000962.3"/>
</dbReference>
<dbReference type="RefSeq" id="WP_003414059.1">
    <property type="nucleotide sequence ID" value="NZ_NVQJ01000020.1"/>
</dbReference>
<dbReference type="PDB" id="5SV2">
    <property type="method" value="X-ray"/>
    <property type="resolution" value="1.31 A"/>
    <property type="chains" value="A=1-138"/>
</dbReference>
<dbReference type="PDBsum" id="5SV2"/>
<dbReference type="SMR" id="P9WF91"/>
<dbReference type="STRING" id="83332.Rv2757c"/>
<dbReference type="PaxDb" id="83332-Rv2757c"/>
<dbReference type="DNASU" id="888249"/>
<dbReference type="GeneID" id="888249"/>
<dbReference type="KEGG" id="mtu:Rv2757c"/>
<dbReference type="KEGG" id="mtv:RVBD_2757c"/>
<dbReference type="TubercuList" id="Rv2757c"/>
<dbReference type="eggNOG" id="COG1487">
    <property type="taxonomic scope" value="Bacteria"/>
</dbReference>
<dbReference type="InParanoid" id="P9WF91"/>
<dbReference type="OrthoDB" id="5185254at2"/>
<dbReference type="PhylomeDB" id="P9WF91"/>
<dbReference type="Proteomes" id="UP000001584">
    <property type="component" value="Chromosome"/>
</dbReference>
<dbReference type="GO" id="GO:0000287">
    <property type="term" value="F:magnesium ion binding"/>
    <property type="evidence" value="ECO:0007669"/>
    <property type="project" value="UniProtKB-UniRule"/>
</dbReference>
<dbReference type="GO" id="GO:0004521">
    <property type="term" value="F:RNA endonuclease activity"/>
    <property type="evidence" value="ECO:0000318"/>
    <property type="project" value="GO_Central"/>
</dbReference>
<dbReference type="GO" id="GO:0045926">
    <property type="term" value="P:negative regulation of growth"/>
    <property type="evidence" value="ECO:0000315"/>
    <property type="project" value="MTBBASE"/>
</dbReference>
<dbReference type="CDD" id="cd18755">
    <property type="entry name" value="PIN_MtVapC3_VapC21-like"/>
    <property type="match status" value="1"/>
</dbReference>
<dbReference type="FunFam" id="3.40.50.1010:FF:000068">
    <property type="entry name" value="Ribonuclease VapC"/>
    <property type="match status" value="1"/>
</dbReference>
<dbReference type="Gene3D" id="3.40.50.1010">
    <property type="entry name" value="5'-nuclease"/>
    <property type="match status" value="1"/>
</dbReference>
<dbReference type="HAMAP" id="MF_00265">
    <property type="entry name" value="VapC_Nob1"/>
    <property type="match status" value="1"/>
</dbReference>
<dbReference type="InterPro" id="IPR029060">
    <property type="entry name" value="PIN-like_dom_sf"/>
</dbReference>
<dbReference type="InterPro" id="IPR002716">
    <property type="entry name" value="PIN_dom"/>
</dbReference>
<dbReference type="InterPro" id="IPR050556">
    <property type="entry name" value="Type_II_TA_system_RNase"/>
</dbReference>
<dbReference type="InterPro" id="IPR022907">
    <property type="entry name" value="VapC_family"/>
</dbReference>
<dbReference type="PANTHER" id="PTHR33653">
    <property type="entry name" value="RIBONUCLEASE VAPC2"/>
    <property type="match status" value="1"/>
</dbReference>
<dbReference type="PANTHER" id="PTHR33653:SF1">
    <property type="entry name" value="RIBONUCLEASE VAPC2"/>
    <property type="match status" value="1"/>
</dbReference>
<dbReference type="Pfam" id="PF01850">
    <property type="entry name" value="PIN"/>
    <property type="match status" value="1"/>
</dbReference>
<dbReference type="SUPFAM" id="SSF88723">
    <property type="entry name" value="PIN domain-like"/>
    <property type="match status" value="1"/>
</dbReference>
<keyword id="KW-0002">3D-structure</keyword>
<keyword id="KW-0378">Hydrolase</keyword>
<keyword id="KW-0460">Magnesium</keyword>
<keyword id="KW-0479">Metal-binding</keyword>
<keyword id="KW-0540">Nuclease</keyword>
<keyword id="KW-1185">Reference proteome</keyword>
<keyword id="KW-1277">Toxin-antitoxin system</keyword>
<accession>P9WF91</accession>
<accession>L0TAS8</accession>
<accession>O33299</accession>
<accession>Q7D6M9</accession>
<gene>
    <name evidence="1" type="primary">vapC21</name>
    <name type="ordered locus">Rv2757c</name>
</gene>
<feature type="chain" id="PRO_0000407880" description="Ribonuclease VapC21">
    <location>
        <begin position="1"/>
        <end position="138"/>
    </location>
</feature>
<feature type="domain" description="PINc" evidence="1">
    <location>
        <begin position="6"/>
        <end position="128"/>
    </location>
</feature>
<feature type="binding site" evidence="1">
    <location>
        <position position="8"/>
    </location>
    <ligand>
        <name>Mg(2+)</name>
        <dbReference type="ChEBI" id="CHEBI:18420"/>
    </ligand>
</feature>
<feature type="binding site" evidence="1">
    <location>
        <position position="97"/>
    </location>
    <ligand>
        <name>Mg(2+)</name>
        <dbReference type="ChEBI" id="CHEBI:18420"/>
    </ligand>
</feature>
<feature type="strand" evidence="3">
    <location>
        <begin position="5"/>
        <end position="7"/>
    </location>
</feature>
<feature type="helix" evidence="3">
    <location>
        <begin position="9"/>
        <end position="12"/>
    </location>
</feature>
<feature type="turn" evidence="3">
    <location>
        <begin position="13"/>
        <end position="16"/>
    </location>
</feature>
<feature type="helix" evidence="3">
    <location>
        <begin position="18"/>
        <end position="29"/>
    </location>
</feature>
<feature type="strand" evidence="3">
    <location>
        <begin position="33"/>
        <end position="35"/>
    </location>
</feature>
<feature type="helix" evidence="3">
    <location>
        <begin position="37"/>
        <end position="44"/>
    </location>
</feature>
<feature type="helix" evidence="3">
    <location>
        <begin position="50"/>
        <end position="63"/>
    </location>
</feature>
<feature type="strand" evidence="3">
    <location>
        <begin position="64"/>
        <end position="66"/>
    </location>
</feature>
<feature type="helix" evidence="3">
    <location>
        <begin position="73"/>
        <end position="85"/>
    </location>
</feature>
<feature type="turn" evidence="3">
    <location>
        <begin position="86"/>
        <end position="88"/>
    </location>
</feature>
<feature type="helix" evidence="3">
    <location>
        <begin position="89"/>
        <end position="91"/>
    </location>
</feature>
<feature type="helix" evidence="3">
    <location>
        <begin position="95"/>
        <end position="107"/>
    </location>
</feature>
<feature type="strand" evidence="3">
    <location>
        <begin position="111"/>
        <end position="114"/>
    </location>
</feature>
<feature type="helix" evidence="3">
    <location>
        <begin position="117"/>
        <end position="125"/>
    </location>
</feature>
<feature type="strand" evidence="3">
    <location>
        <begin position="129"/>
        <end position="133"/>
    </location>
</feature>
<comment type="function">
    <text evidence="1 2">Toxic component of a type II toxin-antitoxin (TA) system. An RNase (By similarity). Upon expression in M.smegmatis inhibits colony formation. Its toxic effect is neutralized by coexpression with cognate antitoxin VapB21.</text>
</comment>
<comment type="cofactor">
    <cofactor evidence="1">
        <name>Mg(2+)</name>
        <dbReference type="ChEBI" id="CHEBI:18420"/>
    </cofactor>
</comment>
<comment type="similarity">
    <text evidence="1">Belongs to the PINc/VapC protein family.</text>
</comment>
<sequence>MTTRYLLDKSAAYRAHLPAVRHRLEPLMERGLLARCGITDLEFGVSARSREDHRTLGTYRRDALEYVNTPDTVWVRAWEIQEALTDKGFHRSVKIPDLIIAAVAEHHGIPVMHYDQDFERIAAITRQPVEWVVAPGTA</sequence>
<evidence type="ECO:0000255" key="1">
    <source>
        <dbReference type="HAMAP-Rule" id="MF_00265"/>
    </source>
</evidence>
<evidence type="ECO:0000269" key="2">
    <source>
    </source>
</evidence>
<evidence type="ECO:0007829" key="3">
    <source>
        <dbReference type="PDB" id="5SV2"/>
    </source>
</evidence>
<proteinExistence type="evidence at protein level"/>
<reference key="1">
    <citation type="journal article" date="1998" name="Nature">
        <title>Deciphering the biology of Mycobacterium tuberculosis from the complete genome sequence.</title>
        <authorList>
            <person name="Cole S.T."/>
            <person name="Brosch R."/>
            <person name="Parkhill J."/>
            <person name="Garnier T."/>
            <person name="Churcher C.M."/>
            <person name="Harris D.E."/>
            <person name="Gordon S.V."/>
            <person name="Eiglmeier K."/>
            <person name="Gas S."/>
            <person name="Barry C.E. III"/>
            <person name="Tekaia F."/>
            <person name="Badcock K."/>
            <person name="Basham D."/>
            <person name="Brown D."/>
            <person name="Chillingworth T."/>
            <person name="Connor R."/>
            <person name="Davies R.M."/>
            <person name="Devlin K."/>
            <person name="Feltwell T."/>
            <person name="Gentles S."/>
            <person name="Hamlin N."/>
            <person name="Holroyd S."/>
            <person name="Hornsby T."/>
            <person name="Jagels K."/>
            <person name="Krogh A."/>
            <person name="McLean J."/>
            <person name="Moule S."/>
            <person name="Murphy L.D."/>
            <person name="Oliver S."/>
            <person name="Osborne J."/>
            <person name="Quail M.A."/>
            <person name="Rajandream M.A."/>
            <person name="Rogers J."/>
            <person name="Rutter S."/>
            <person name="Seeger K."/>
            <person name="Skelton S."/>
            <person name="Squares S."/>
            <person name="Squares R."/>
            <person name="Sulston J.E."/>
            <person name="Taylor K."/>
            <person name="Whitehead S."/>
            <person name="Barrell B.G."/>
        </authorList>
    </citation>
    <scope>NUCLEOTIDE SEQUENCE [LARGE SCALE GENOMIC DNA]</scope>
    <source>
        <strain>ATCC 25618 / H37Rv</strain>
    </source>
</reference>
<reference key="2">
    <citation type="journal article" date="2005" name="Nucleic Acids Res.">
        <title>Toxin-antitoxin loci are highly abundant in free-living but lost from host-associated prokaryotes.</title>
        <authorList>
            <person name="Pandey D.P."/>
            <person name="Gerdes K."/>
        </authorList>
    </citation>
    <scope>POSSIBLE FUNCTION</scope>
    <source>
        <strain>ATCC 25618 / H37Rv</strain>
    </source>
</reference>
<reference key="3">
    <citation type="journal article" date="2009" name="PLoS Genet.">
        <title>Comprehensive functional analysis of Mycobacterium tuberculosis toxin-antitoxin systems: implications for pathogenesis, stress responses, and evolution.</title>
        <authorList>
            <person name="Ramage H.R."/>
            <person name="Connolly L.E."/>
            <person name="Cox J.S."/>
        </authorList>
    </citation>
    <scope>EXPRESSION IN M.SMEGMATIS</scope>
    <scope>FUNCTION AS A TOXIN</scope>
    <source>
        <strain>ATCC 35801 / TMC 107 / Erdman</strain>
    </source>
</reference>
<protein>
    <recommendedName>
        <fullName evidence="1">Ribonuclease VapC21</fullName>
        <shortName evidence="1">RNase VapC21</shortName>
        <ecNumber evidence="1">3.1.-.-</ecNumber>
    </recommendedName>
    <alternativeName>
        <fullName evidence="1">Toxin VapC21</fullName>
    </alternativeName>
</protein>
<organism>
    <name type="scientific">Mycobacterium tuberculosis (strain ATCC 25618 / H37Rv)</name>
    <dbReference type="NCBI Taxonomy" id="83332"/>
    <lineage>
        <taxon>Bacteria</taxon>
        <taxon>Bacillati</taxon>
        <taxon>Actinomycetota</taxon>
        <taxon>Actinomycetes</taxon>
        <taxon>Mycobacteriales</taxon>
        <taxon>Mycobacteriaceae</taxon>
        <taxon>Mycobacterium</taxon>
        <taxon>Mycobacterium tuberculosis complex</taxon>
    </lineage>
</organism>
<name>VPC21_MYCTU</name>